<name>RL5_VIBCM</name>
<evidence type="ECO:0000255" key="1">
    <source>
        <dbReference type="HAMAP-Rule" id="MF_01333"/>
    </source>
</evidence>
<evidence type="ECO:0000305" key="2"/>
<comment type="function">
    <text evidence="1">This is one of the proteins that bind and probably mediate the attachment of the 5S RNA into the large ribosomal subunit, where it forms part of the central protuberance. In the 70S ribosome it contacts protein S13 of the 30S subunit (bridge B1b), connecting the 2 subunits; this bridge is implicated in subunit movement. Contacts the P site tRNA; the 5S rRNA and some of its associated proteins might help stabilize positioning of ribosome-bound tRNAs.</text>
</comment>
<comment type="subunit">
    <text evidence="1">Part of the 50S ribosomal subunit; part of the 5S rRNA/L5/L18/L25 subcomplex. Contacts the 5S rRNA and the P site tRNA. Forms a bridge to the 30S subunit in the 70S ribosome.</text>
</comment>
<comment type="similarity">
    <text evidence="1">Belongs to the universal ribosomal protein uL5 family.</text>
</comment>
<sequence length="179" mass="20158">MAKLHDYYKSSVVAELTKQFSYTSVMQVPRIEKITLNMGVGEAINDKKLLENAASDMAIISGQKPLITKARKSVAGFKIREGYPIGCKVTLRGERMWDFLERLISIALPRVRDFRGVNGKSFDGRGNYSMGVREQIIFPEIDYDKVDRVRGLDITITTTAGTDEEGRALLAAFNFPFRK</sequence>
<proteinExistence type="inferred from homology"/>
<accession>C3LRP6</accession>
<protein>
    <recommendedName>
        <fullName evidence="1">Large ribosomal subunit protein uL5</fullName>
    </recommendedName>
    <alternativeName>
        <fullName evidence="2">50S ribosomal protein L5</fullName>
    </alternativeName>
</protein>
<reference key="1">
    <citation type="journal article" date="2008" name="PLoS ONE">
        <title>A recalibrated molecular clock and independent origins for the cholera pandemic clones.</title>
        <authorList>
            <person name="Feng L."/>
            <person name="Reeves P.R."/>
            <person name="Lan R."/>
            <person name="Ren Y."/>
            <person name="Gao C."/>
            <person name="Zhou Z."/>
            <person name="Ren Y."/>
            <person name="Cheng J."/>
            <person name="Wang W."/>
            <person name="Wang J."/>
            <person name="Qian W."/>
            <person name="Li D."/>
            <person name="Wang L."/>
        </authorList>
    </citation>
    <scope>NUCLEOTIDE SEQUENCE [LARGE SCALE GENOMIC DNA]</scope>
    <source>
        <strain>M66-2</strain>
    </source>
</reference>
<keyword id="KW-0687">Ribonucleoprotein</keyword>
<keyword id="KW-0689">Ribosomal protein</keyword>
<keyword id="KW-0694">RNA-binding</keyword>
<keyword id="KW-0699">rRNA-binding</keyword>
<keyword id="KW-0820">tRNA-binding</keyword>
<organism>
    <name type="scientific">Vibrio cholerae serotype O1 (strain M66-2)</name>
    <dbReference type="NCBI Taxonomy" id="579112"/>
    <lineage>
        <taxon>Bacteria</taxon>
        <taxon>Pseudomonadati</taxon>
        <taxon>Pseudomonadota</taxon>
        <taxon>Gammaproteobacteria</taxon>
        <taxon>Vibrionales</taxon>
        <taxon>Vibrionaceae</taxon>
        <taxon>Vibrio</taxon>
    </lineage>
</organism>
<gene>
    <name evidence="1" type="primary">rplE</name>
    <name type="ordered locus">VCM66_2504</name>
</gene>
<feature type="chain" id="PRO_1000166157" description="Large ribosomal subunit protein uL5">
    <location>
        <begin position="1"/>
        <end position="179"/>
    </location>
</feature>
<dbReference type="EMBL" id="CP001233">
    <property type="protein sequence ID" value="ACP06801.1"/>
    <property type="molecule type" value="Genomic_DNA"/>
</dbReference>
<dbReference type="RefSeq" id="WP_001096208.1">
    <property type="nucleotide sequence ID" value="NC_012578.1"/>
</dbReference>
<dbReference type="SMR" id="C3LRP6"/>
<dbReference type="GeneID" id="94012764"/>
<dbReference type="KEGG" id="vcm:VCM66_2504"/>
<dbReference type="HOGENOM" id="CLU_061015_2_1_6"/>
<dbReference type="Proteomes" id="UP000001217">
    <property type="component" value="Chromosome I"/>
</dbReference>
<dbReference type="GO" id="GO:1990904">
    <property type="term" value="C:ribonucleoprotein complex"/>
    <property type="evidence" value="ECO:0007669"/>
    <property type="project" value="UniProtKB-KW"/>
</dbReference>
<dbReference type="GO" id="GO:0005840">
    <property type="term" value="C:ribosome"/>
    <property type="evidence" value="ECO:0007669"/>
    <property type="project" value="UniProtKB-KW"/>
</dbReference>
<dbReference type="GO" id="GO:0019843">
    <property type="term" value="F:rRNA binding"/>
    <property type="evidence" value="ECO:0007669"/>
    <property type="project" value="UniProtKB-UniRule"/>
</dbReference>
<dbReference type="GO" id="GO:0003735">
    <property type="term" value="F:structural constituent of ribosome"/>
    <property type="evidence" value="ECO:0007669"/>
    <property type="project" value="InterPro"/>
</dbReference>
<dbReference type="GO" id="GO:0000049">
    <property type="term" value="F:tRNA binding"/>
    <property type="evidence" value="ECO:0007669"/>
    <property type="project" value="UniProtKB-UniRule"/>
</dbReference>
<dbReference type="GO" id="GO:0006412">
    <property type="term" value="P:translation"/>
    <property type="evidence" value="ECO:0007669"/>
    <property type="project" value="UniProtKB-UniRule"/>
</dbReference>
<dbReference type="FunFam" id="3.30.1440.10:FF:000001">
    <property type="entry name" value="50S ribosomal protein L5"/>
    <property type="match status" value="1"/>
</dbReference>
<dbReference type="Gene3D" id="3.30.1440.10">
    <property type="match status" value="1"/>
</dbReference>
<dbReference type="HAMAP" id="MF_01333_B">
    <property type="entry name" value="Ribosomal_uL5_B"/>
    <property type="match status" value="1"/>
</dbReference>
<dbReference type="InterPro" id="IPR002132">
    <property type="entry name" value="Ribosomal_uL5"/>
</dbReference>
<dbReference type="InterPro" id="IPR020930">
    <property type="entry name" value="Ribosomal_uL5_bac-type"/>
</dbReference>
<dbReference type="InterPro" id="IPR031309">
    <property type="entry name" value="Ribosomal_uL5_C"/>
</dbReference>
<dbReference type="InterPro" id="IPR020929">
    <property type="entry name" value="Ribosomal_uL5_CS"/>
</dbReference>
<dbReference type="InterPro" id="IPR022803">
    <property type="entry name" value="Ribosomal_uL5_dom_sf"/>
</dbReference>
<dbReference type="InterPro" id="IPR031310">
    <property type="entry name" value="Ribosomal_uL5_N"/>
</dbReference>
<dbReference type="NCBIfam" id="NF000585">
    <property type="entry name" value="PRK00010.1"/>
    <property type="match status" value="1"/>
</dbReference>
<dbReference type="PANTHER" id="PTHR11994">
    <property type="entry name" value="60S RIBOSOMAL PROTEIN L11-RELATED"/>
    <property type="match status" value="1"/>
</dbReference>
<dbReference type="Pfam" id="PF00281">
    <property type="entry name" value="Ribosomal_L5"/>
    <property type="match status" value="1"/>
</dbReference>
<dbReference type="Pfam" id="PF00673">
    <property type="entry name" value="Ribosomal_L5_C"/>
    <property type="match status" value="1"/>
</dbReference>
<dbReference type="PIRSF" id="PIRSF002161">
    <property type="entry name" value="Ribosomal_L5"/>
    <property type="match status" value="1"/>
</dbReference>
<dbReference type="SUPFAM" id="SSF55282">
    <property type="entry name" value="RL5-like"/>
    <property type="match status" value="1"/>
</dbReference>
<dbReference type="PROSITE" id="PS00358">
    <property type="entry name" value="RIBOSOMAL_L5"/>
    <property type="match status" value="1"/>
</dbReference>